<protein>
    <recommendedName>
        <fullName>ATP-dependent RNA helicase DBP9</fullName>
        <ecNumber>3.6.4.13</ecNumber>
    </recommendedName>
</protein>
<name>DBP9_GIBZE</name>
<accession>Q4IJ56</accession>
<accession>A0A0E0RV35</accession>
<accession>V6R0V7</accession>
<dbReference type="EC" id="3.6.4.13"/>
<dbReference type="EMBL" id="DS231663">
    <property type="protein sequence ID" value="ESU08233.1"/>
    <property type="molecule type" value="Genomic_DNA"/>
</dbReference>
<dbReference type="EMBL" id="HG970332">
    <property type="protein sequence ID" value="CEF75110.1"/>
    <property type="molecule type" value="Genomic_DNA"/>
</dbReference>
<dbReference type="RefSeq" id="XP_011318718.1">
    <property type="nucleotide sequence ID" value="XM_011320416.1"/>
</dbReference>
<dbReference type="SMR" id="Q4IJ56"/>
<dbReference type="FunCoup" id="Q4IJ56">
    <property type="interactions" value="975"/>
</dbReference>
<dbReference type="STRING" id="229533.Q4IJ56"/>
<dbReference type="GeneID" id="23550111"/>
<dbReference type="KEGG" id="fgr:FGSG_02752"/>
<dbReference type="VEuPathDB" id="FungiDB:FGRAMPH1_01G06609"/>
<dbReference type="eggNOG" id="KOG0346">
    <property type="taxonomic scope" value="Eukaryota"/>
</dbReference>
<dbReference type="HOGENOM" id="CLU_003041_17_1_1"/>
<dbReference type="InParanoid" id="Q4IJ56"/>
<dbReference type="OrthoDB" id="103649at110618"/>
<dbReference type="Proteomes" id="UP000070720">
    <property type="component" value="Chromosome 1"/>
</dbReference>
<dbReference type="GO" id="GO:0005829">
    <property type="term" value="C:cytosol"/>
    <property type="evidence" value="ECO:0007669"/>
    <property type="project" value="TreeGrafter"/>
</dbReference>
<dbReference type="GO" id="GO:0005730">
    <property type="term" value="C:nucleolus"/>
    <property type="evidence" value="ECO:0007669"/>
    <property type="project" value="UniProtKB-SubCell"/>
</dbReference>
<dbReference type="GO" id="GO:0005524">
    <property type="term" value="F:ATP binding"/>
    <property type="evidence" value="ECO:0007669"/>
    <property type="project" value="UniProtKB-KW"/>
</dbReference>
<dbReference type="GO" id="GO:0016887">
    <property type="term" value="F:ATP hydrolysis activity"/>
    <property type="evidence" value="ECO:0007669"/>
    <property type="project" value="RHEA"/>
</dbReference>
<dbReference type="GO" id="GO:0003723">
    <property type="term" value="F:RNA binding"/>
    <property type="evidence" value="ECO:0007669"/>
    <property type="project" value="UniProtKB-KW"/>
</dbReference>
<dbReference type="GO" id="GO:0003724">
    <property type="term" value="F:RNA helicase activity"/>
    <property type="evidence" value="ECO:0007669"/>
    <property type="project" value="UniProtKB-EC"/>
</dbReference>
<dbReference type="GO" id="GO:0006364">
    <property type="term" value="P:rRNA processing"/>
    <property type="evidence" value="ECO:0007669"/>
    <property type="project" value="UniProtKB-KW"/>
</dbReference>
<dbReference type="CDD" id="cd17961">
    <property type="entry name" value="DEADc_DDX56"/>
    <property type="match status" value="1"/>
</dbReference>
<dbReference type="CDD" id="cd18787">
    <property type="entry name" value="SF2_C_DEAD"/>
    <property type="match status" value="1"/>
</dbReference>
<dbReference type="Gene3D" id="3.40.50.300">
    <property type="entry name" value="P-loop containing nucleotide triphosphate hydrolases"/>
    <property type="match status" value="2"/>
</dbReference>
<dbReference type="InterPro" id="IPR011545">
    <property type="entry name" value="DEAD/DEAH_box_helicase_dom"/>
</dbReference>
<dbReference type="InterPro" id="IPR050079">
    <property type="entry name" value="DEAD_box_RNA_helicase"/>
</dbReference>
<dbReference type="InterPro" id="IPR014001">
    <property type="entry name" value="Helicase_ATP-bd"/>
</dbReference>
<dbReference type="InterPro" id="IPR001650">
    <property type="entry name" value="Helicase_C-like"/>
</dbReference>
<dbReference type="InterPro" id="IPR027417">
    <property type="entry name" value="P-loop_NTPase"/>
</dbReference>
<dbReference type="InterPro" id="IPR014014">
    <property type="entry name" value="RNA_helicase_DEAD_Q_motif"/>
</dbReference>
<dbReference type="PANTHER" id="PTHR47959">
    <property type="entry name" value="ATP-DEPENDENT RNA HELICASE RHLE-RELATED"/>
    <property type="match status" value="1"/>
</dbReference>
<dbReference type="PANTHER" id="PTHR47959:SF21">
    <property type="entry name" value="DEAD-BOX HELICASE 56"/>
    <property type="match status" value="1"/>
</dbReference>
<dbReference type="Pfam" id="PF00270">
    <property type="entry name" value="DEAD"/>
    <property type="match status" value="1"/>
</dbReference>
<dbReference type="Pfam" id="PF00271">
    <property type="entry name" value="Helicase_C"/>
    <property type="match status" value="2"/>
</dbReference>
<dbReference type="SMART" id="SM00487">
    <property type="entry name" value="DEXDc"/>
    <property type="match status" value="1"/>
</dbReference>
<dbReference type="SMART" id="SM00490">
    <property type="entry name" value="HELICc"/>
    <property type="match status" value="1"/>
</dbReference>
<dbReference type="SUPFAM" id="SSF52540">
    <property type="entry name" value="P-loop containing nucleoside triphosphate hydrolases"/>
    <property type="match status" value="2"/>
</dbReference>
<dbReference type="PROSITE" id="PS51192">
    <property type="entry name" value="HELICASE_ATP_BIND_1"/>
    <property type="match status" value="1"/>
</dbReference>
<dbReference type="PROSITE" id="PS51194">
    <property type="entry name" value="HELICASE_CTER"/>
    <property type="match status" value="1"/>
</dbReference>
<dbReference type="PROSITE" id="PS51195">
    <property type="entry name" value="Q_MOTIF"/>
    <property type="match status" value="1"/>
</dbReference>
<evidence type="ECO:0000250" key="1"/>
<evidence type="ECO:0000255" key="2">
    <source>
        <dbReference type="PROSITE-ProRule" id="PRU00541"/>
    </source>
</evidence>
<evidence type="ECO:0000255" key="3">
    <source>
        <dbReference type="PROSITE-ProRule" id="PRU00542"/>
    </source>
</evidence>
<evidence type="ECO:0000256" key="4">
    <source>
        <dbReference type="SAM" id="MobiDB-lite"/>
    </source>
</evidence>
<evidence type="ECO:0000305" key="5"/>
<feature type="chain" id="PRO_0000232342" description="ATP-dependent RNA helicase DBP9">
    <location>
        <begin position="1"/>
        <end position="615"/>
    </location>
</feature>
<feature type="domain" description="Helicase ATP-binding" evidence="2">
    <location>
        <begin position="71"/>
        <end position="248"/>
    </location>
</feature>
<feature type="domain" description="Helicase C-terminal" evidence="3">
    <location>
        <begin position="259"/>
        <end position="491"/>
    </location>
</feature>
<feature type="region of interest" description="Disordered" evidence="4">
    <location>
        <begin position="1"/>
        <end position="37"/>
    </location>
</feature>
<feature type="region of interest" description="Disordered" evidence="4">
    <location>
        <begin position="351"/>
        <end position="396"/>
    </location>
</feature>
<feature type="region of interest" description="Disordered" evidence="4">
    <location>
        <begin position="583"/>
        <end position="615"/>
    </location>
</feature>
<feature type="short sequence motif" description="Q motif">
    <location>
        <begin position="40"/>
        <end position="68"/>
    </location>
</feature>
<feature type="short sequence motif" description="DEAD box">
    <location>
        <begin position="196"/>
        <end position="199"/>
    </location>
</feature>
<feature type="compositionally biased region" description="Basic and acidic residues" evidence="4">
    <location>
        <begin position="25"/>
        <end position="37"/>
    </location>
</feature>
<feature type="compositionally biased region" description="Acidic residues" evidence="4">
    <location>
        <begin position="351"/>
        <end position="363"/>
    </location>
</feature>
<feature type="compositionally biased region" description="Basic residues" evidence="4">
    <location>
        <begin position="583"/>
        <end position="594"/>
    </location>
</feature>
<feature type="binding site" evidence="2">
    <location>
        <begin position="84"/>
        <end position="91"/>
    </location>
    <ligand>
        <name>ATP</name>
        <dbReference type="ChEBI" id="CHEBI:30616"/>
    </ligand>
</feature>
<gene>
    <name type="primary">DBP9</name>
    <name type="ORF">FGRRES_02752</name>
    <name type="ORF">FGSG_02752</name>
</gene>
<sequence>MSASTKRKRDQAEESVPAENPASTDVEKAIKPAQKQEEETSFVDLGLDPRLLQAIAQQKFAKPTLVQRKAIPLALNGQDVLAKADCGSGKTAAYVLPLLSSILKRKATDSTAFTTALILVPTRELADQVSKAIEQFASFCAKDISTAKLTDKVSSKVQRALLSNSPDIVISTPSTAWQNVNSSALSIDKLTHLILDEADLVLSYGYSEDLENLSRSVPKGVQVMMMSATLSDEVDTLKGIFRRDPTLLDLKEKEAEGEGITQFVAKCGEDEKFLLAYVIFKLKLIKGKCIIFVSDIDRCYRLKLFFEQFGIRSCILNSELPLNSRVHVVEEFNRHVYDIIIAADEKNEMLGDDEEPAETAEAQDDAKKSNEGDDAETEAKRPKKKAKKSKGGDKEYGVSRGVDFKKVSAVINFDLPTTASAYTHRIGRTARAGQTGMALSFVVPKDLYRKHMPTSTPACENDEKIMARIIRQQAKRDKEVKPYNFNMKQVDPFRYRMNDALRAVTKVAIREARTRELRQELLKSEKLKRYFEENPTELSHLRHDGELRTARQQAHLKHIPEYLMPKDGKQALTEDVGFVAMRKDKKGKGKKGRGFKVGSRKRDPLKTFKARRKTK</sequence>
<keyword id="KW-0067">ATP-binding</keyword>
<keyword id="KW-0347">Helicase</keyword>
<keyword id="KW-0378">Hydrolase</keyword>
<keyword id="KW-0547">Nucleotide-binding</keyword>
<keyword id="KW-0539">Nucleus</keyword>
<keyword id="KW-1185">Reference proteome</keyword>
<keyword id="KW-0690">Ribosome biogenesis</keyword>
<keyword id="KW-0694">RNA-binding</keyword>
<keyword id="KW-0698">rRNA processing</keyword>
<organism>
    <name type="scientific">Gibberella zeae (strain ATCC MYA-4620 / CBS 123657 / FGSC 9075 / NRRL 31084 / PH-1)</name>
    <name type="common">Wheat head blight fungus</name>
    <name type="synonym">Fusarium graminearum</name>
    <dbReference type="NCBI Taxonomy" id="229533"/>
    <lineage>
        <taxon>Eukaryota</taxon>
        <taxon>Fungi</taxon>
        <taxon>Dikarya</taxon>
        <taxon>Ascomycota</taxon>
        <taxon>Pezizomycotina</taxon>
        <taxon>Sordariomycetes</taxon>
        <taxon>Hypocreomycetidae</taxon>
        <taxon>Hypocreales</taxon>
        <taxon>Nectriaceae</taxon>
        <taxon>Fusarium</taxon>
    </lineage>
</organism>
<comment type="function">
    <text evidence="1">ATP-binding RNA helicase involved in the biogenesis of 60S ribosomal subunits and is required for the normal formation of 25S and 5.8S rRNAs.</text>
</comment>
<comment type="catalytic activity">
    <reaction>
        <text>ATP + H2O = ADP + phosphate + H(+)</text>
        <dbReference type="Rhea" id="RHEA:13065"/>
        <dbReference type="ChEBI" id="CHEBI:15377"/>
        <dbReference type="ChEBI" id="CHEBI:15378"/>
        <dbReference type="ChEBI" id="CHEBI:30616"/>
        <dbReference type="ChEBI" id="CHEBI:43474"/>
        <dbReference type="ChEBI" id="CHEBI:456216"/>
        <dbReference type="EC" id="3.6.4.13"/>
    </reaction>
</comment>
<comment type="subcellular location">
    <subcellularLocation>
        <location evidence="1">Nucleus</location>
        <location evidence="1">Nucleolus</location>
    </subcellularLocation>
</comment>
<comment type="domain">
    <text>The Q motif is unique to and characteristic of the DEAD box family of RNA helicases and controls ATP binding and hydrolysis.</text>
</comment>
<comment type="similarity">
    <text evidence="5">Belongs to the DEAD box helicase family. DDX56/DBP9 subfamily.</text>
</comment>
<reference key="1">
    <citation type="journal article" date="2007" name="Science">
        <title>The Fusarium graminearum genome reveals a link between localized polymorphism and pathogen specialization.</title>
        <authorList>
            <person name="Cuomo C.A."/>
            <person name="Gueldener U."/>
            <person name="Xu J.-R."/>
            <person name="Trail F."/>
            <person name="Turgeon B.G."/>
            <person name="Di Pietro A."/>
            <person name="Walton J.D."/>
            <person name="Ma L.-J."/>
            <person name="Baker S.E."/>
            <person name="Rep M."/>
            <person name="Adam G."/>
            <person name="Antoniw J."/>
            <person name="Baldwin T."/>
            <person name="Calvo S.E."/>
            <person name="Chang Y.-L."/>
            <person name="DeCaprio D."/>
            <person name="Gale L.R."/>
            <person name="Gnerre S."/>
            <person name="Goswami R.S."/>
            <person name="Hammond-Kosack K."/>
            <person name="Harris L.J."/>
            <person name="Hilburn K."/>
            <person name="Kennell J.C."/>
            <person name="Kroken S."/>
            <person name="Magnuson J.K."/>
            <person name="Mannhaupt G."/>
            <person name="Mauceli E.W."/>
            <person name="Mewes H.-W."/>
            <person name="Mitterbauer R."/>
            <person name="Muehlbauer G."/>
            <person name="Muensterkoetter M."/>
            <person name="Nelson D."/>
            <person name="O'Donnell K."/>
            <person name="Ouellet T."/>
            <person name="Qi W."/>
            <person name="Quesneville H."/>
            <person name="Roncero M.I.G."/>
            <person name="Seong K.-Y."/>
            <person name="Tetko I.V."/>
            <person name="Urban M."/>
            <person name="Waalwijk C."/>
            <person name="Ward T.J."/>
            <person name="Yao J."/>
            <person name="Birren B.W."/>
            <person name="Kistler H.C."/>
        </authorList>
    </citation>
    <scope>NUCLEOTIDE SEQUENCE [LARGE SCALE GENOMIC DNA]</scope>
    <source>
        <strain>ATCC MYA-4620 / CBS 123657 / FGSC 9075 / NRRL 31084 / PH-1</strain>
    </source>
</reference>
<reference key="2">
    <citation type="journal article" date="2010" name="Nature">
        <title>Comparative genomics reveals mobile pathogenicity chromosomes in Fusarium.</title>
        <authorList>
            <person name="Ma L.-J."/>
            <person name="van der Does H.C."/>
            <person name="Borkovich K.A."/>
            <person name="Coleman J.J."/>
            <person name="Daboussi M.-J."/>
            <person name="Di Pietro A."/>
            <person name="Dufresne M."/>
            <person name="Freitag M."/>
            <person name="Grabherr M."/>
            <person name="Henrissat B."/>
            <person name="Houterman P.M."/>
            <person name="Kang S."/>
            <person name="Shim W.-B."/>
            <person name="Woloshuk C."/>
            <person name="Xie X."/>
            <person name="Xu J.-R."/>
            <person name="Antoniw J."/>
            <person name="Baker S.E."/>
            <person name="Bluhm B.H."/>
            <person name="Breakspear A."/>
            <person name="Brown D.W."/>
            <person name="Butchko R.A.E."/>
            <person name="Chapman S."/>
            <person name="Coulson R."/>
            <person name="Coutinho P.M."/>
            <person name="Danchin E.G.J."/>
            <person name="Diener A."/>
            <person name="Gale L.R."/>
            <person name="Gardiner D.M."/>
            <person name="Goff S."/>
            <person name="Hammond-Kosack K.E."/>
            <person name="Hilburn K."/>
            <person name="Hua-Van A."/>
            <person name="Jonkers W."/>
            <person name="Kazan K."/>
            <person name="Kodira C.D."/>
            <person name="Koehrsen M."/>
            <person name="Kumar L."/>
            <person name="Lee Y.-H."/>
            <person name="Li L."/>
            <person name="Manners J.M."/>
            <person name="Miranda-Saavedra D."/>
            <person name="Mukherjee M."/>
            <person name="Park G."/>
            <person name="Park J."/>
            <person name="Park S.-Y."/>
            <person name="Proctor R.H."/>
            <person name="Regev A."/>
            <person name="Ruiz-Roldan M.C."/>
            <person name="Sain D."/>
            <person name="Sakthikumar S."/>
            <person name="Sykes S."/>
            <person name="Schwartz D.C."/>
            <person name="Turgeon B.G."/>
            <person name="Wapinski I."/>
            <person name="Yoder O."/>
            <person name="Young S."/>
            <person name="Zeng Q."/>
            <person name="Zhou S."/>
            <person name="Galagan J."/>
            <person name="Cuomo C.A."/>
            <person name="Kistler H.C."/>
            <person name="Rep M."/>
        </authorList>
    </citation>
    <scope>GENOME REANNOTATION</scope>
    <source>
        <strain>ATCC MYA-4620 / CBS 123657 / FGSC 9075 / NRRL 31084 / PH-1</strain>
    </source>
</reference>
<reference key="3">
    <citation type="journal article" date="2015" name="BMC Genomics">
        <title>The completed genome sequence of the pathogenic ascomycete fungus Fusarium graminearum.</title>
        <authorList>
            <person name="King R."/>
            <person name="Urban M."/>
            <person name="Hammond-Kosack M.C.U."/>
            <person name="Hassani-Pak K."/>
            <person name="Hammond-Kosack K.E."/>
        </authorList>
    </citation>
    <scope>NUCLEOTIDE SEQUENCE [LARGE SCALE GENOMIC DNA]</scope>
    <source>
        <strain>ATCC MYA-4620 / CBS 123657 / FGSC 9075 / NRRL 31084 / PH-1</strain>
    </source>
</reference>
<proteinExistence type="inferred from homology"/>